<gene>
    <name evidence="1" type="primary">rplT</name>
    <name type="ordered locus">TDE_2154</name>
</gene>
<keyword id="KW-1185">Reference proteome</keyword>
<keyword id="KW-0687">Ribonucleoprotein</keyword>
<keyword id="KW-0689">Ribosomal protein</keyword>
<keyword id="KW-0694">RNA-binding</keyword>
<keyword id="KW-0699">rRNA-binding</keyword>
<proteinExistence type="inferred from homology"/>
<name>RL20_TREDE</name>
<dbReference type="EMBL" id="AE017226">
    <property type="protein sequence ID" value="AAS12674.1"/>
    <property type="molecule type" value="Genomic_DNA"/>
</dbReference>
<dbReference type="RefSeq" id="NP_972755.1">
    <property type="nucleotide sequence ID" value="NC_002967.9"/>
</dbReference>
<dbReference type="RefSeq" id="WP_002668132.1">
    <property type="nucleotide sequence ID" value="NC_002967.9"/>
</dbReference>
<dbReference type="SMR" id="Q73KR3"/>
<dbReference type="STRING" id="243275.TDE_2154"/>
<dbReference type="PaxDb" id="243275-TDE_2154"/>
<dbReference type="GeneID" id="2739140"/>
<dbReference type="KEGG" id="tde:TDE_2154"/>
<dbReference type="PATRIC" id="fig|243275.7.peg.2035"/>
<dbReference type="eggNOG" id="COG0292">
    <property type="taxonomic scope" value="Bacteria"/>
</dbReference>
<dbReference type="HOGENOM" id="CLU_123265_0_1_12"/>
<dbReference type="OrthoDB" id="9808966at2"/>
<dbReference type="Proteomes" id="UP000008212">
    <property type="component" value="Chromosome"/>
</dbReference>
<dbReference type="GO" id="GO:1990904">
    <property type="term" value="C:ribonucleoprotein complex"/>
    <property type="evidence" value="ECO:0007669"/>
    <property type="project" value="UniProtKB-KW"/>
</dbReference>
<dbReference type="GO" id="GO:0005840">
    <property type="term" value="C:ribosome"/>
    <property type="evidence" value="ECO:0007669"/>
    <property type="project" value="UniProtKB-KW"/>
</dbReference>
<dbReference type="GO" id="GO:0019843">
    <property type="term" value="F:rRNA binding"/>
    <property type="evidence" value="ECO:0007669"/>
    <property type="project" value="UniProtKB-UniRule"/>
</dbReference>
<dbReference type="GO" id="GO:0003735">
    <property type="term" value="F:structural constituent of ribosome"/>
    <property type="evidence" value="ECO:0007669"/>
    <property type="project" value="InterPro"/>
</dbReference>
<dbReference type="GO" id="GO:0000027">
    <property type="term" value="P:ribosomal large subunit assembly"/>
    <property type="evidence" value="ECO:0007669"/>
    <property type="project" value="UniProtKB-UniRule"/>
</dbReference>
<dbReference type="GO" id="GO:0006412">
    <property type="term" value="P:translation"/>
    <property type="evidence" value="ECO:0007669"/>
    <property type="project" value="InterPro"/>
</dbReference>
<dbReference type="CDD" id="cd07026">
    <property type="entry name" value="Ribosomal_L20"/>
    <property type="match status" value="1"/>
</dbReference>
<dbReference type="FunFam" id="1.10.1900.20:FF:000001">
    <property type="entry name" value="50S ribosomal protein L20"/>
    <property type="match status" value="1"/>
</dbReference>
<dbReference type="Gene3D" id="6.10.160.10">
    <property type="match status" value="1"/>
</dbReference>
<dbReference type="Gene3D" id="1.10.1900.20">
    <property type="entry name" value="Ribosomal protein L20"/>
    <property type="match status" value="1"/>
</dbReference>
<dbReference type="HAMAP" id="MF_00382">
    <property type="entry name" value="Ribosomal_bL20"/>
    <property type="match status" value="1"/>
</dbReference>
<dbReference type="InterPro" id="IPR005813">
    <property type="entry name" value="Ribosomal_bL20"/>
</dbReference>
<dbReference type="InterPro" id="IPR049946">
    <property type="entry name" value="RIBOSOMAL_L20_CS"/>
</dbReference>
<dbReference type="InterPro" id="IPR035566">
    <property type="entry name" value="Ribosomal_protein_bL20_C"/>
</dbReference>
<dbReference type="NCBIfam" id="TIGR01032">
    <property type="entry name" value="rplT_bact"/>
    <property type="match status" value="1"/>
</dbReference>
<dbReference type="PANTHER" id="PTHR10986">
    <property type="entry name" value="39S RIBOSOMAL PROTEIN L20"/>
    <property type="match status" value="1"/>
</dbReference>
<dbReference type="Pfam" id="PF00453">
    <property type="entry name" value="Ribosomal_L20"/>
    <property type="match status" value="1"/>
</dbReference>
<dbReference type="PRINTS" id="PR00062">
    <property type="entry name" value="RIBOSOMALL20"/>
</dbReference>
<dbReference type="SUPFAM" id="SSF74731">
    <property type="entry name" value="Ribosomal protein L20"/>
    <property type="match status" value="1"/>
</dbReference>
<dbReference type="PROSITE" id="PS00937">
    <property type="entry name" value="RIBOSOMAL_L20"/>
    <property type="match status" value="1"/>
</dbReference>
<protein>
    <recommendedName>
        <fullName evidence="1">Large ribosomal subunit protein bL20</fullName>
    </recommendedName>
    <alternativeName>
        <fullName evidence="2">50S ribosomal protein L20</fullName>
    </alternativeName>
</protein>
<accession>Q73KR3</accession>
<sequence length="119" mass="13309">MSRSTSSDRRITRRKAILKQAKGFRGRRGTNFKAARDAVRKALLHSYVGRKDKKSDMRQIWITRINAAVRAEGITYSRFIAGMNKAGIQLNRKALSNMAIEDPTAFKAVVEASKKALGV</sequence>
<evidence type="ECO:0000255" key="1">
    <source>
        <dbReference type="HAMAP-Rule" id="MF_00382"/>
    </source>
</evidence>
<evidence type="ECO:0000305" key="2"/>
<feature type="chain" id="PRO_0000177252" description="Large ribosomal subunit protein bL20">
    <location>
        <begin position="1"/>
        <end position="119"/>
    </location>
</feature>
<reference key="1">
    <citation type="journal article" date="2004" name="Proc. Natl. Acad. Sci. U.S.A.">
        <title>Comparison of the genome of the oral pathogen Treponema denticola with other spirochete genomes.</title>
        <authorList>
            <person name="Seshadri R."/>
            <person name="Myers G.S.A."/>
            <person name="Tettelin H."/>
            <person name="Eisen J.A."/>
            <person name="Heidelberg J.F."/>
            <person name="Dodson R.J."/>
            <person name="Davidsen T.M."/>
            <person name="DeBoy R.T."/>
            <person name="Fouts D.E."/>
            <person name="Haft D.H."/>
            <person name="Selengut J."/>
            <person name="Ren Q."/>
            <person name="Brinkac L.M."/>
            <person name="Madupu R."/>
            <person name="Kolonay J.F."/>
            <person name="Durkin S.A."/>
            <person name="Daugherty S.C."/>
            <person name="Shetty J."/>
            <person name="Shvartsbeyn A."/>
            <person name="Gebregeorgis E."/>
            <person name="Geer K."/>
            <person name="Tsegaye G."/>
            <person name="Malek J.A."/>
            <person name="Ayodeji B."/>
            <person name="Shatsman S."/>
            <person name="McLeod M.P."/>
            <person name="Smajs D."/>
            <person name="Howell J.K."/>
            <person name="Pal S."/>
            <person name="Amin A."/>
            <person name="Vashisth P."/>
            <person name="McNeill T.Z."/>
            <person name="Xiang Q."/>
            <person name="Sodergren E."/>
            <person name="Baca E."/>
            <person name="Weinstock G.M."/>
            <person name="Norris S.J."/>
            <person name="Fraser C.M."/>
            <person name="Paulsen I.T."/>
        </authorList>
    </citation>
    <scope>NUCLEOTIDE SEQUENCE [LARGE SCALE GENOMIC DNA]</scope>
    <source>
        <strain>ATCC 35405 / DSM 14222 / CIP 103919 / JCM 8153 / KCTC 15104</strain>
    </source>
</reference>
<organism>
    <name type="scientific">Treponema denticola (strain ATCC 35405 / DSM 14222 / CIP 103919 / JCM 8153 / KCTC 15104)</name>
    <dbReference type="NCBI Taxonomy" id="243275"/>
    <lineage>
        <taxon>Bacteria</taxon>
        <taxon>Pseudomonadati</taxon>
        <taxon>Spirochaetota</taxon>
        <taxon>Spirochaetia</taxon>
        <taxon>Spirochaetales</taxon>
        <taxon>Treponemataceae</taxon>
        <taxon>Treponema</taxon>
    </lineage>
</organism>
<comment type="function">
    <text evidence="1">Binds directly to 23S ribosomal RNA and is necessary for the in vitro assembly process of the 50S ribosomal subunit. It is not involved in the protein synthesizing functions of that subunit.</text>
</comment>
<comment type="similarity">
    <text evidence="1">Belongs to the bacterial ribosomal protein bL20 family.</text>
</comment>